<comment type="function">
    <text evidence="1">Endonuclease that specifically degrades the RNA of RNA-DNA hybrids.</text>
</comment>
<comment type="catalytic activity">
    <reaction evidence="1">
        <text>Endonucleolytic cleavage to 5'-phosphomonoester.</text>
        <dbReference type="EC" id="3.1.26.4"/>
    </reaction>
</comment>
<comment type="cofactor">
    <cofactor evidence="1">
        <name>Mn(2+)</name>
        <dbReference type="ChEBI" id="CHEBI:29035"/>
    </cofactor>
    <cofactor evidence="1">
        <name>Mg(2+)</name>
        <dbReference type="ChEBI" id="CHEBI:18420"/>
    </cofactor>
    <text evidence="1">Manganese or magnesium. Binds 1 divalent metal ion per monomer in the absence of substrate. May bind a second metal ion after substrate binding.</text>
</comment>
<comment type="subcellular location">
    <subcellularLocation>
        <location evidence="1">Cytoplasm</location>
    </subcellularLocation>
</comment>
<comment type="similarity">
    <text evidence="1">Belongs to the RNase HII family.</text>
</comment>
<sequence>MVPIAAIRRKLMDGSISHNELDELKKDQRKGVQELLKRYQAQQEKQQTLIQMHKQMWRYEQELKQRGYVAVCGVDEVGRGPLAGPVTACACILPDDFQLLGLTDSKKLSKAKREEYAKMISEQAVAYSIASVSAAEIDEINILQATKKAMTKAINGLSQKTDHLLLDAVRLDVPIAQTSLIKGDAKSLSIAASSVLAKVWRDRYMEELAQTYPGYGFDTHAGYGTASHLQALRTYGMTPEHRKSFRPVLEESQGLIYGT</sequence>
<gene>
    <name evidence="1" type="primary">rnhB</name>
    <name type="ordered locus">ABC2284</name>
</gene>
<name>RNH2_SHOC1</name>
<dbReference type="EC" id="3.1.26.4" evidence="1"/>
<dbReference type="EMBL" id="AP006627">
    <property type="protein sequence ID" value="BAD64819.1"/>
    <property type="molecule type" value="Genomic_DNA"/>
</dbReference>
<dbReference type="RefSeq" id="WP_011247127.1">
    <property type="nucleotide sequence ID" value="NC_006582.1"/>
</dbReference>
<dbReference type="SMR" id="Q5WFP1"/>
<dbReference type="STRING" id="66692.ABC2284"/>
<dbReference type="KEGG" id="bcl:ABC2284"/>
<dbReference type="eggNOG" id="COG0164">
    <property type="taxonomic scope" value="Bacteria"/>
</dbReference>
<dbReference type="HOGENOM" id="CLU_036532_2_1_9"/>
<dbReference type="OrthoDB" id="9803420at2"/>
<dbReference type="Proteomes" id="UP000001168">
    <property type="component" value="Chromosome"/>
</dbReference>
<dbReference type="GO" id="GO:0005737">
    <property type="term" value="C:cytoplasm"/>
    <property type="evidence" value="ECO:0007669"/>
    <property type="project" value="UniProtKB-SubCell"/>
</dbReference>
<dbReference type="GO" id="GO:0032299">
    <property type="term" value="C:ribonuclease H2 complex"/>
    <property type="evidence" value="ECO:0007669"/>
    <property type="project" value="TreeGrafter"/>
</dbReference>
<dbReference type="GO" id="GO:0030145">
    <property type="term" value="F:manganese ion binding"/>
    <property type="evidence" value="ECO:0007669"/>
    <property type="project" value="UniProtKB-UniRule"/>
</dbReference>
<dbReference type="GO" id="GO:0003723">
    <property type="term" value="F:RNA binding"/>
    <property type="evidence" value="ECO:0007669"/>
    <property type="project" value="InterPro"/>
</dbReference>
<dbReference type="GO" id="GO:0004523">
    <property type="term" value="F:RNA-DNA hybrid ribonuclease activity"/>
    <property type="evidence" value="ECO:0007669"/>
    <property type="project" value="UniProtKB-UniRule"/>
</dbReference>
<dbReference type="GO" id="GO:0043137">
    <property type="term" value="P:DNA replication, removal of RNA primer"/>
    <property type="evidence" value="ECO:0007669"/>
    <property type="project" value="TreeGrafter"/>
</dbReference>
<dbReference type="GO" id="GO:0006298">
    <property type="term" value="P:mismatch repair"/>
    <property type="evidence" value="ECO:0007669"/>
    <property type="project" value="TreeGrafter"/>
</dbReference>
<dbReference type="CDD" id="cd07182">
    <property type="entry name" value="RNase_HII_bacteria_HII_like"/>
    <property type="match status" value="1"/>
</dbReference>
<dbReference type="FunFam" id="3.30.420.10:FF:000006">
    <property type="entry name" value="Ribonuclease HII"/>
    <property type="match status" value="1"/>
</dbReference>
<dbReference type="Gene3D" id="3.30.420.10">
    <property type="entry name" value="Ribonuclease H-like superfamily/Ribonuclease H"/>
    <property type="match status" value="1"/>
</dbReference>
<dbReference type="HAMAP" id="MF_00052_B">
    <property type="entry name" value="RNase_HII_B"/>
    <property type="match status" value="1"/>
</dbReference>
<dbReference type="InterPro" id="IPR022898">
    <property type="entry name" value="RNase_HII"/>
</dbReference>
<dbReference type="InterPro" id="IPR001352">
    <property type="entry name" value="RNase_HII/HIII"/>
</dbReference>
<dbReference type="InterPro" id="IPR024567">
    <property type="entry name" value="RNase_HII/HIII_dom"/>
</dbReference>
<dbReference type="InterPro" id="IPR012337">
    <property type="entry name" value="RNaseH-like_sf"/>
</dbReference>
<dbReference type="InterPro" id="IPR036397">
    <property type="entry name" value="RNaseH_sf"/>
</dbReference>
<dbReference type="NCBIfam" id="NF000594">
    <property type="entry name" value="PRK00015.1-1"/>
    <property type="match status" value="1"/>
</dbReference>
<dbReference type="NCBIfam" id="NF000595">
    <property type="entry name" value="PRK00015.1-3"/>
    <property type="match status" value="1"/>
</dbReference>
<dbReference type="PANTHER" id="PTHR10954">
    <property type="entry name" value="RIBONUCLEASE H2 SUBUNIT A"/>
    <property type="match status" value="1"/>
</dbReference>
<dbReference type="PANTHER" id="PTHR10954:SF18">
    <property type="entry name" value="RIBONUCLEASE HII"/>
    <property type="match status" value="1"/>
</dbReference>
<dbReference type="Pfam" id="PF01351">
    <property type="entry name" value="RNase_HII"/>
    <property type="match status" value="1"/>
</dbReference>
<dbReference type="SUPFAM" id="SSF53098">
    <property type="entry name" value="Ribonuclease H-like"/>
    <property type="match status" value="1"/>
</dbReference>
<dbReference type="PROSITE" id="PS51975">
    <property type="entry name" value="RNASE_H_2"/>
    <property type="match status" value="1"/>
</dbReference>
<evidence type="ECO:0000255" key="1">
    <source>
        <dbReference type="HAMAP-Rule" id="MF_00052"/>
    </source>
</evidence>
<evidence type="ECO:0000255" key="2">
    <source>
        <dbReference type="PROSITE-ProRule" id="PRU01319"/>
    </source>
</evidence>
<reference key="1">
    <citation type="submission" date="2003-10" db="EMBL/GenBank/DDBJ databases">
        <title>The complete genome sequence of the alkaliphilic Bacillus clausii KSM-K16.</title>
        <authorList>
            <person name="Takaki Y."/>
            <person name="Kageyama Y."/>
            <person name="Shimamura S."/>
            <person name="Suzuki H."/>
            <person name="Nishi S."/>
            <person name="Hatada Y."/>
            <person name="Kawai S."/>
            <person name="Ito S."/>
            <person name="Horikoshi K."/>
        </authorList>
    </citation>
    <scope>NUCLEOTIDE SEQUENCE [LARGE SCALE GENOMIC DNA]</scope>
    <source>
        <strain>KSM-K16</strain>
    </source>
</reference>
<organism>
    <name type="scientific">Shouchella clausii (strain KSM-K16)</name>
    <name type="common">Alkalihalobacillus clausii</name>
    <dbReference type="NCBI Taxonomy" id="66692"/>
    <lineage>
        <taxon>Bacteria</taxon>
        <taxon>Bacillati</taxon>
        <taxon>Bacillota</taxon>
        <taxon>Bacilli</taxon>
        <taxon>Bacillales</taxon>
        <taxon>Bacillaceae</taxon>
        <taxon>Shouchella</taxon>
    </lineage>
</organism>
<accession>Q5WFP1</accession>
<keyword id="KW-0963">Cytoplasm</keyword>
<keyword id="KW-0255">Endonuclease</keyword>
<keyword id="KW-0378">Hydrolase</keyword>
<keyword id="KW-0464">Manganese</keyword>
<keyword id="KW-0479">Metal-binding</keyword>
<keyword id="KW-0540">Nuclease</keyword>
<keyword id="KW-1185">Reference proteome</keyword>
<proteinExistence type="inferred from homology"/>
<feature type="chain" id="PRO_0000111541" description="Ribonuclease HII">
    <location>
        <begin position="1"/>
        <end position="259"/>
    </location>
</feature>
<feature type="domain" description="RNase H type-2" evidence="2">
    <location>
        <begin position="69"/>
        <end position="257"/>
    </location>
</feature>
<feature type="binding site" evidence="1">
    <location>
        <position position="75"/>
    </location>
    <ligand>
        <name>a divalent metal cation</name>
        <dbReference type="ChEBI" id="CHEBI:60240"/>
    </ligand>
</feature>
<feature type="binding site" evidence="1">
    <location>
        <position position="76"/>
    </location>
    <ligand>
        <name>a divalent metal cation</name>
        <dbReference type="ChEBI" id="CHEBI:60240"/>
    </ligand>
</feature>
<feature type="binding site" evidence="1">
    <location>
        <position position="167"/>
    </location>
    <ligand>
        <name>a divalent metal cation</name>
        <dbReference type="ChEBI" id="CHEBI:60240"/>
    </ligand>
</feature>
<protein>
    <recommendedName>
        <fullName evidence="1">Ribonuclease HII</fullName>
        <shortName evidence="1">RNase HII</shortName>
        <ecNumber evidence="1">3.1.26.4</ecNumber>
    </recommendedName>
</protein>